<name>TGM3_RAT</name>
<accession>D4A5U3</accession>
<sequence>MSALEVQNINWQMPMNRRAHHTDKFSSQDFIVRRGQPWEVILLCNRSLESGDNLNFIVSTGPQPSESARTKAVFSISGRNTSGWSAALKASNGNNLFIAIASPVSAPIGLYTLNVEVSSKGRVSSVKLGTFTVLFNPWQQGDDVFMSNHAERQEYVEEDSGIIYVGSTNRIGMVGWNFGQFEEDILSISLSILDRSLNFRRDPATDVARRNDPKYVCRVLSAMINANDDSGVLSGNWSGNYSGGVDPRTWNGSVEILKNWKKSGFRPVQFGQCWVFAGTLNTVLRCLGVPSRVITNFNSAHDTDRNLSVDVYYDAMGNPLEKGSDSVWNFHVWNEGWFVRTDLGPSYNGWQVLDATPQERSQGVFQCGPASVNAIKDGEVDQNFDMIFIFAEVNADRITWIYNNRDGSQKQNSVDTYSIGKYISTKAVGSNSRMDVTIKYKHPEGSKEERQVQQKAMNKLKPNASFGATSSRGPQGEEKEPSISGKFKVTGVLAVGKEVSLALILKNTTSDRKTVTTNMTAWTIVYNGTLVHEVWKDSATISLDPEEEIQYPVKIAYSQYDRYLKADNMIRITAVCKVPDEAEVVVERDVILDNPTLTLEVLDQAQLRKPVVVQMLFSNPLDEPVKNCVLMVEGSGLLRGSLKIDVPALRPKEKSRVRFEIFPTRIGIKQLLADFSCNKFPAIKAMLVIEVSE</sequence>
<comment type="function">
    <text evidence="1">Catalyzes the calcium-dependent formation of isopeptide cross-links between glutamine and lysine residues in various proteins, as well as the conjugation of polyamines to proteins. Involved in the formation of the cornified envelope (CE), a specialized component consisting of covalent cross-links of proteins beneath the plasma membrane of terminally differentiated keratinocytes. Catalyzes small proline-rich proteins and LOR cross-linking to form small interchain oligomers, which are further cross-linked by TGM1 onto the growing CE scaffold. In hair follicles, involved in cross-linking structural proteins to hardening the inner root sheath (By similarity).</text>
</comment>
<comment type="catalytic activity">
    <reaction evidence="2 3">
        <text>L-glutaminyl-[protein] + L-lysyl-[protein] = [protein]-L-lysyl-N(6)-5-L-glutamyl-[protein] + NH4(+)</text>
        <dbReference type="Rhea" id="RHEA:54816"/>
        <dbReference type="Rhea" id="RHEA-COMP:9752"/>
        <dbReference type="Rhea" id="RHEA-COMP:10207"/>
        <dbReference type="Rhea" id="RHEA-COMP:14005"/>
        <dbReference type="ChEBI" id="CHEBI:28938"/>
        <dbReference type="ChEBI" id="CHEBI:29969"/>
        <dbReference type="ChEBI" id="CHEBI:30011"/>
        <dbReference type="ChEBI" id="CHEBI:138370"/>
        <dbReference type="EC" id="2.3.2.13"/>
    </reaction>
</comment>
<comment type="cofactor">
    <cofactor evidence="1">
        <name>Ca(2+)</name>
        <dbReference type="ChEBI" id="CHEBI:29108"/>
    </cofactor>
    <text evidence="1">Binds 3 Ca(2+) cations per subunit. Binds 1 Ca(2+) as a zymogen, and binds 2 more Ca(2+) cations, or other divalent metal cations, after proteolytic processing.</text>
</comment>
<comment type="subunit">
    <text evidence="1">Consists of two polypeptide chains, which are synthesized as a precursor form of a single polypeptide.</text>
</comment>
<comment type="subcellular location">
    <subcellularLocation>
        <location evidence="2">Cytoplasm</location>
    </subcellularLocation>
</comment>
<comment type="PTM">
    <text evidence="1">Activated by proteolytic processing. In vitro activation is commonly achieved by cleavage with dispase, a neutral bacterial protease. Physiological activation may be catalyzed by CTSL and, to a lesser extent, by CTSS (By similarity).</text>
</comment>
<comment type="similarity">
    <text evidence="5">Belongs to the transglutaminase superfamily. Transglutaminase family.</text>
</comment>
<evidence type="ECO:0000250" key="1"/>
<evidence type="ECO:0000250" key="2">
    <source>
        <dbReference type="UniProtKB" id="Q08188"/>
    </source>
</evidence>
<evidence type="ECO:0000255" key="3">
    <source>
        <dbReference type="PROSITE-ProRule" id="PRU10024"/>
    </source>
</evidence>
<evidence type="ECO:0000256" key="4">
    <source>
        <dbReference type="SAM" id="MobiDB-lite"/>
    </source>
</evidence>
<evidence type="ECO:0000305" key="5"/>
<gene>
    <name type="primary">Tgm3</name>
    <name type="synonym">Tgase3</name>
</gene>
<keyword id="KW-0012">Acyltransferase</keyword>
<keyword id="KW-0106">Calcium</keyword>
<keyword id="KW-0963">Cytoplasm</keyword>
<keyword id="KW-0417">Keratinization</keyword>
<keyword id="KW-0479">Metal-binding</keyword>
<keyword id="KW-0597">Phosphoprotein</keyword>
<keyword id="KW-1185">Reference proteome</keyword>
<keyword id="KW-0808">Transferase</keyword>
<keyword id="KW-0865">Zymogen</keyword>
<organism>
    <name type="scientific">Rattus norvegicus</name>
    <name type="common">Rat</name>
    <dbReference type="NCBI Taxonomy" id="10116"/>
    <lineage>
        <taxon>Eukaryota</taxon>
        <taxon>Metazoa</taxon>
        <taxon>Chordata</taxon>
        <taxon>Craniata</taxon>
        <taxon>Vertebrata</taxon>
        <taxon>Euteleostomi</taxon>
        <taxon>Mammalia</taxon>
        <taxon>Eutheria</taxon>
        <taxon>Euarchontoglires</taxon>
        <taxon>Glires</taxon>
        <taxon>Rodentia</taxon>
        <taxon>Myomorpha</taxon>
        <taxon>Muroidea</taxon>
        <taxon>Muridae</taxon>
        <taxon>Murinae</taxon>
        <taxon>Rattus</taxon>
    </lineage>
</organism>
<reference key="1">
    <citation type="submission" date="2005-07" db="EMBL/GenBank/DDBJ databases">
        <authorList>
            <person name="Mural R.J."/>
            <person name="Adams M.D."/>
            <person name="Myers E.W."/>
            <person name="Smith H.O."/>
            <person name="Venter J.C."/>
        </authorList>
    </citation>
    <scope>NUCLEOTIDE SEQUENCE [LARGE SCALE GENOMIC DNA]</scope>
</reference>
<protein>
    <recommendedName>
        <fullName>Protein-glutamine gamma-glutamyltransferase E</fullName>
        <ecNumber evidence="2">2.3.2.13</ecNumber>
    </recommendedName>
    <alternativeName>
        <fullName>Transglutaminase E</fullName>
        <shortName>TG(E)</shortName>
        <shortName>TGE</shortName>
        <shortName>TGase E</shortName>
    </alternativeName>
    <alternativeName>
        <fullName>Transglutaminase-3</fullName>
        <shortName>TGase-3</shortName>
    </alternativeName>
    <component>
        <recommendedName>
            <fullName>Protein-glutamine gamma-glutamyltransferase E 50 kDa catalytic chain</fullName>
        </recommendedName>
    </component>
    <component>
        <recommendedName>
            <fullName>Protein-glutamine gamma-glutamyltransferase E 27 kDa non-catalytic chain</fullName>
        </recommendedName>
    </component>
</protein>
<dbReference type="EC" id="2.3.2.13" evidence="2"/>
<dbReference type="EMBL" id="CH473949">
    <property type="protein sequence ID" value="EDL80172.1"/>
    <property type="molecule type" value="Genomic_DNA"/>
</dbReference>
<dbReference type="RefSeq" id="NP_001102429.1">
    <property type="nucleotide sequence ID" value="NM_001108959.1"/>
</dbReference>
<dbReference type="SMR" id="D4A5U3"/>
<dbReference type="BioGRID" id="265783">
    <property type="interactions" value="1"/>
</dbReference>
<dbReference type="FunCoup" id="D4A5U3">
    <property type="interactions" value="38"/>
</dbReference>
<dbReference type="STRING" id="10116.ENSRNOP00000059160"/>
<dbReference type="iPTMnet" id="D4A5U3"/>
<dbReference type="PhosphoSitePlus" id="D4A5U3"/>
<dbReference type="PaxDb" id="10116-ENSRNOP00000059160"/>
<dbReference type="Ensembl" id="ENSRNOT00000063828.3">
    <property type="protein sequence ID" value="ENSRNOP00000059160.1"/>
    <property type="gene ID" value="ENSRNOG00000006753.8"/>
</dbReference>
<dbReference type="GeneID" id="366189"/>
<dbReference type="KEGG" id="rno:366189"/>
<dbReference type="UCSC" id="RGD:1561831">
    <property type="organism name" value="rat"/>
</dbReference>
<dbReference type="AGR" id="RGD:1561831"/>
<dbReference type="CTD" id="7053"/>
<dbReference type="RGD" id="1561831">
    <property type="gene designation" value="Tgm3"/>
</dbReference>
<dbReference type="eggNOG" id="ENOG502QUPB">
    <property type="taxonomic scope" value="Eukaryota"/>
</dbReference>
<dbReference type="GeneTree" id="ENSGT01050000244866"/>
<dbReference type="HOGENOM" id="CLU_013435_1_0_1"/>
<dbReference type="InParanoid" id="D4A5U3"/>
<dbReference type="OMA" id="SMVGWNF"/>
<dbReference type="OrthoDB" id="437511at2759"/>
<dbReference type="PhylomeDB" id="D4A5U3"/>
<dbReference type="TreeFam" id="TF324278"/>
<dbReference type="PRO" id="PR:D4A5U3"/>
<dbReference type="Proteomes" id="UP000002494">
    <property type="component" value="Chromosome 3"/>
</dbReference>
<dbReference type="Proteomes" id="UP000234681">
    <property type="component" value="Chromosome 3"/>
</dbReference>
<dbReference type="Bgee" id="ENSRNOG00000006753">
    <property type="expression patterns" value="Expressed in esophagus and 12 other cell types or tissues"/>
</dbReference>
<dbReference type="GO" id="GO:0005737">
    <property type="term" value="C:cytoplasm"/>
    <property type="evidence" value="ECO:0000250"/>
    <property type="project" value="UniProtKB"/>
</dbReference>
<dbReference type="GO" id="GO:0031234">
    <property type="term" value="C:extrinsic component of cytoplasmic side of plasma membrane"/>
    <property type="evidence" value="ECO:0000266"/>
    <property type="project" value="RGD"/>
</dbReference>
<dbReference type="GO" id="GO:0032991">
    <property type="term" value="C:protein-containing complex"/>
    <property type="evidence" value="ECO:0000266"/>
    <property type="project" value="RGD"/>
</dbReference>
<dbReference type="GO" id="GO:0005509">
    <property type="term" value="F:calcium ion binding"/>
    <property type="evidence" value="ECO:0000250"/>
    <property type="project" value="UniProtKB"/>
</dbReference>
<dbReference type="GO" id="GO:0003824">
    <property type="term" value="F:catalytic activity"/>
    <property type="evidence" value="ECO:0000266"/>
    <property type="project" value="RGD"/>
</dbReference>
<dbReference type="GO" id="GO:0003810">
    <property type="term" value="F:protein-glutamine gamma-glutamyltransferase activity"/>
    <property type="evidence" value="ECO:0000250"/>
    <property type="project" value="UniProtKB"/>
</dbReference>
<dbReference type="GO" id="GO:0005198">
    <property type="term" value="F:structural molecule activity"/>
    <property type="evidence" value="ECO:0000266"/>
    <property type="project" value="RGD"/>
</dbReference>
<dbReference type="GO" id="GO:0031424">
    <property type="term" value="P:keratinization"/>
    <property type="evidence" value="ECO:0007669"/>
    <property type="project" value="UniProtKB-KW"/>
</dbReference>
<dbReference type="GO" id="GO:0030216">
    <property type="term" value="P:keratinocyte differentiation"/>
    <property type="evidence" value="ECO:0000266"/>
    <property type="project" value="RGD"/>
</dbReference>
<dbReference type="GO" id="GO:0018149">
    <property type="term" value="P:peptide cross-linking"/>
    <property type="evidence" value="ECO:0000250"/>
    <property type="project" value="UniProtKB"/>
</dbReference>
<dbReference type="FunFam" id="2.60.40.10:FF:000090">
    <property type="entry name" value="Protein-glutamine gamma-glutamyltransferase 2"/>
    <property type="match status" value="1"/>
</dbReference>
<dbReference type="FunFam" id="2.60.40.10:FF:000278">
    <property type="entry name" value="Protein-glutamine gamma-glutamyltransferase 2"/>
    <property type="match status" value="1"/>
</dbReference>
<dbReference type="FunFam" id="3.90.260.10:FF:000001">
    <property type="entry name" value="Protein-glutamine gamma-glutamyltransferase 2"/>
    <property type="match status" value="1"/>
</dbReference>
<dbReference type="FunFam" id="2.60.40.10:FF:000171">
    <property type="entry name" value="protein-glutamine gamma-glutamyltransferase 6"/>
    <property type="match status" value="1"/>
</dbReference>
<dbReference type="Gene3D" id="2.60.40.10">
    <property type="entry name" value="Immunoglobulins"/>
    <property type="match status" value="3"/>
</dbReference>
<dbReference type="Gene3D" id="3.90.260.10">
    <property type="entry name" value="Transglutaminase-like"/>
    <property type="match status" value="1"/>
</dbReference>
<dbReference type="InterPro" id="IPR013783">
    <property type="entry name" value="Ig-like_fold"/>
</dbReference>
<dbReference type="InterPro" id="IPR014756">
    <property type="entry name" value="Ig_E-set"/>
</dbReference>
<dbReference type="InterPro" id="IPR038765">
    <property type="entry name" value="Papain-like_cys_pep_sf"/>
</dbReference>
<dbReference type="InterPro" id="IPR050779">
    <property type="entry name" value="Transglutaminase"/>
</dbReference>
<dbReference type="InterPro" id="IPR002931">
    <property type="entry name" value="Transglutaminase-like"/>
</dbReference>
<dbReference type="InterPro" id="IPR036985">
    <property type="entry name" value="Transglutaminase-like_sf"/>
</dbReference>
<dbReference type="InterPro" id="IPR023608">
    <property type="entry name" value="Transglutaminase_animal"/>
</dbReference>
<dbReference type="InterPro" id="IPR013808">
    <property type="entry name" value="Transglutaminase_AS"/>
</dbReference>
<dbReference type="InterPro" id="IPR008958">
    <property type="entry name" value="Transglutaminase_C"/>
</dbReference>
<dbReference type="InterPro" id="IPR036238">
    <property type="entry name" value="Transglutaminase_C_sf"/>
</dbReference>
<dbReference type="InterPro" id="IPR001102">
    <property type="entry name" value="Transglutaminase_N"/>
</dbReference>
<dbReference type="PANTHER" id="PTHR11590">
    <property type="entry name" value="PROTEIN-GLUTAMINE GAMMA-GLUTAMYLTRANSFERASE"/>
    <property type="match status" value="1"/>
</dbReference>
<dbReference type="PANTHER" id="PTHR11590:SF36">
    <property type="entry name" value="PROTEIN-GLUTAMINE GAMMA-GLUTAMYLTRANSFERASE E"/>
    <property type="match status" value="1"/>
</dbReference>
<dbReference type="Pfam" id="PF00927">
    <property type="entry name" value="Transglut_C"/>
    <property type="match status" value="2"/>
</dbReference>
<dbReference type="Pfam" id="PF01841">
    <property type="entry name" value="Transglut_core"/>
    <property type="match status" value="1"/>
</dbReference>
<dbReference type="Pfam" id="PF00868">
    <property type="entry name" value="Transglut_N"/>
    <property type="match status" value="1"/>
</dbReference>
<dbReference type="PIRSF" id="PIRSF000459">
    <property type="entry name" value="TGM_EBP42"/>
    <property type="match status" value="1"/>
</dbReference>
<dbReference type="SMART" id="SM00460">
    <property type="entry name" value="TGc"/>
    <property type="match status" value="1"/>
</dbReference>
<dbReference type="SUPFAM" id="SSF54001">
    <property type="entry name" value="Cysteine proteinases"/>
    <property type="match status" value="1"/>
</dbReference>
<dbReference type="SUPFAM" id="SSF81296">
    <property type="entry name" value="E set domains"/>
    <property type="match status" value="1"/>
</dbReference>
<dbReference type="SUPFAM" id="SSF49309">
    <property type="entry name" value="Transglutaminase, two C-terminal domains"/>
    <property type="match status" value="2"/>
</dbReference>
<dbReference type="PROSITE" id="PS00547">
    <property type="entry name" value="TRANSGLUTAMINASES"/>
    <property type="match status" value="1"/>
</dbReference>
<feature type="chain" id="PRO_0000408951" description="Protein-glutamine gamma-glutamyltransferase E 50 kDa catalytic chain">
    <location>
        <begin position="1"/>
        <end position="467"/>
    </location>
</feature>
<feature type="chain" id="PRO_0000408952" description="Protein-glutamine gamma-glutamyltransferase E 27 kDa non-catalytic chain">
    <location>
        <begin position="468"/>
        <end position="693"/>
    </location>
</feature>
<feature type="region of interest" description="Disordered" evidence="4">
    <location>
        <begin position="455"/>
        <end position="482"/>
    </location>
</feature>
<feature type="active site" evidence="3">
    <location>
        <position position="273"/>
    </location>
</feature>
<feature type="active site" evidence="3">
    <location>
        <position position="331"/>
    </location>
</feature>
<feature type="active site" evidence="3">
    <location>
        <position position="354"/>
    </location>
</feature>
<feature type="binding site" evidence="1">
    <location>
        <position position="222"/>
    </location>
    <ligand>
        <name>Ca(2+)</name>
        <dbReference type="ChEBI" id="CHEBI:29108"/>
        <label>1</label>
    </ligand>
</feature>
<feature type="binding site" evidence="1">
    <location>
        <position position="225"/>
    </location>
    <ligand>
        <name>Ca(2+)</name>
        <dbReference type="ChEBI" id="CHEBI:29108"/>
        <label>1</label>
    </ligand>
</feature>
<feature type="binding site" evidence="1">
    <location>
        <position position="227"/>
    </location>
    <ligand>
        <name>Ca(2+)</name>
        <dbReference type="ChEBI" id="CHEBI:29108"/>
        <label>1</label>
    </ligand>
</feature>
<feature type="binding site" evidence="1">
    <location>
        <position position="228"/>
    </location>
    <ligand>
        <name>Ca(2+)</name>
        <dbReference type="ChEBI" id="CHEBI:29108"/>
        <label>1</label>
    </ligand>
</feature>
<feature type="binding site" evidence="1">
    <location>
        <position position="302"/>
    </location>
    <ligand>
        <name>Ca(2+)</name>
        <dbReference type="ChEBI" id="CHEBI:29108"/>
        <label>2</label>
    </ligand>
</feature>
<feature type="binding site" evidence="1">
    <location>
        <position position="304"/>
    </location>
    <ligand>
        <name>Ca(2+)</name>
        <dbReference type="ChEBI" id="CHEBI:29108"/>
        <label>2</label>
    </ligand>
</feature>
<feature type="binding site" evidence="1">
    <location>
        <position position="306"/>
    </location>
    <ligand>
        <name>Ca(2+)</name>
        <dbReference type="ChEBI" id="CHEBI:29108"/>
        <label>2</label>
    </ligand>
</feature>
<feature type="binding site" evidence="1">
    <location>
        <position position="308"/>
    </location>
    <ligand>
        <name>Ca(2+)</name>
        <dbReference type="ChEBI" id="CHEBI:29108"/>
        <label>2</label>
    </ligand>
</feature>
<feature type="binding site" evidence="1">
    <location>
        <position position="325"/>
    </location>
    <ligand>
        <name>Ca(2+)</name>
        <dbReference type="ChEBI" id="CHEBI:29108"/>
        <label>2</label>
    </ligand>
</feature>
<feature type="binding site" evidence="1">
    <location>
        <position position="394"/>
    </location>
    <ligand>
        <name>Ca(2+)</name>
        <dbReference type="ChEBI" id="CHEBI:29108"/>
        <label>3</label>
    </ligand>
</feature>
<feature type="binding site" evidence="1">
    <location>
        <position position="416"/>
    </location>
    <ligand>
        <name>Ca(2+)</name>
        <dbReference type="ChEBI" id="CHEBI:29108"/>
        <label>3</label>
    </ligand>
</feature>
<feature type="binding site" evidence="1">
    <location>
        <position position="444"/>
    </location>
    <ligand>
        <name>Ca(2+)</name>
        <dbReference type="ChEBI" id="CHEBI:29108"/>
        <label>3</label>
    </ligand>
</feature>
<feature type="binding site" evidence="1">
    <location>
        <position position="449"/>
    </location>
    <ligand>
        <name>Ca(2+)</name>
        <dbReference type="ChEBI" id="CHEBI:29108"/>
        <label>3</label>
    </ligand>
</feature>
<feature type="site" description="Cleavage; by CTSL" evidence="1">
    <location>
        <begin position="467"/>
        <end position="468"/>
    </location>
</feature>
<feature type="modified residue" description="Phosphotyrosine" evidence="2">
    <location>
        <position position="111"/>
    </location>
</feature>
<feature type="modified residue" description="Phosphothreonine" evidence="2">
    <location>
        <position position="112"/>
    </location>
</feature>
<proteinExistence type="inferred from homology"/>